<gene>
    <name type="primary">eryG</name>
    <name type="ordered locus">SACE_0728</name>
</gene>
<proteinExistence type="evidence at protein level"/>
<dbReference type="EC" id="2.1.1.254"/>
<dbReference type="EMBL" id="X60379">
    <property type="protein sequence ID" value="CAA42929.1"/>
    <property type="molecule type" value="Genomic_DNA"/>
</dbReference>
<dbReference type="EMBL" id="AM420293">
    <property type="protein sequence ID" value="CAM00069.1"/>
    <property type="molecule type" value="Genomic_DNA"/>
</dbReference>
<dbReference type="EMBL" id="M54983">
    <property type="protein sequence ID" value="AAA26498.1"/>
    <property type="molecule type" value="Genomic_DNA"/>
</dbReference>
<dbReference type="PIR" id="S18533">
    <property type="entry name" value="S18533"/>
</dbReference>
<dbReference type="RefSeq" id="WP_009950399.1">
    <property type="nucleotide sequence ID" value="NC_009142.1"/>
</dbReference>
<dbReference type="SMR" id="A4F7P5"/>
<dbReference type="STRING" id="405948.SACE_0728"/>
<dbReference type="KEGG" id="sen:SACE_0728"/>
<dbReference type="eggNOG" id="COG2230">
    <property type="taxonomic scope" value="Bacteria"/>
</dbReference>
<dbReference type="HOGENOM" id="CLU_039068_6_0_11"/>
<dbReference type="OrthoDB" id="9769602at2"/>
<dbReference type="BioCyc" id="MetaCyc:MONOMER-17061"/>
<dbReference type="BRENDA" id="2.1.1.254">
    <property type="organism ID" value="5518"/>
</dbReference>
<dbReference type="UniPathway" id="UPA00240"/>
<dbReference type="Proteomes" id="UP000006728">
    <property type="component" value="Chromosome"/>
</dbReference>
<dbReference type="GO" id="GO:0102307">
    <property type="term" value="F:erythromycin 3''-o-methyltransferase activity"/>
    <property type="evidence" value="ECO:0007669"/>
    <property type="project" value="UniProtKB-EC"/>
</dbReference>
<dbReference type="GO" id="GO:0008757">
    <property type="term" value="F:S-adenosylmethionine-dependent methyltransferase activity"/>
    <property type="evidence" value="ECO:0000315"/>
    <property type="project" value="UniProtKB"/>
</dbReference>
<dbReference type="GO" id="GO:0017000">
    <property type="term" value="P:antibiotic biosynthetic process"/>
    <property type="evidence" value="ECO:0000315"/>
    <property type="project" value="UniProtKB"/>
</dbReference>
<dbReference type="GO" id="GO:0032259">
    <property type="term" value="P:methylation"/>
    <property type="evidence" value="ECO:0000315"/>
    <property type="project" value="UniProtKB"/>
</dbReference>
<dbReference type="CDD" id="cd02440">
    <property type="entry name" value="AdoMet_MTases"/>
    <property type="match status" value="1"/>
</dbReference>
<dbReference type="Gene3D" id="3.40.50.150">
    <property type="entry name" value="Vaccinia Virus protein VP39"/>
    <property type="match status" value="1"/>
</dbReference>
<dbReference type="InterPro" id="IPR050447">
    <property type="entry name" value="Erg6_SMT_methyltransf"/>
</dbReference>
<dbReference type="InterPro" id="IPR041698">
    <property type="entry name" value="Methyltransf_25"/>
</dbReference>
<dbReference type="InterPro" id="IPR029063">
    <property type="entry name" value="SAM-dependent_MTases_sf"/>
</dbReference>
<dbReference type="PANTHER" id="PTHR44068:SF11">
    <property type="entry name" value="GERANYL DIPHOSPHATE 2-C-METHYLTRANSFERASE"/>
    <property type="match status" value="1"/>
</dbReference>
<dbReference type="PANTHER" id="PTHR44068">
    <property type="entry name" value="ZGC:194242"/>
    <property type="match status" value="1"/>
</dbReference>
<dbReference type="Pfam" id="PF13649">
    <property type="entry name" value="Methyltransf_25"/>
    <property type="match status" value="1"/>
</dbReference>
<dbReference type="SUPFAM" id="SSF53335">
    <property type="entry name" value="S-adenosyl-L-methionine-dependent methyltransferases"/>
    <property type="match status" value="1"/>
</dbReference>
<evidence type="ECO:0000250" key="1"/>
<evidence type="ECO:0000269" key="2">
    <source>
    </source>
</evidence>
<evidence type="ECO:0000269" key="3">
    <source>
    </source>
</evidence>
<evidence type="ECO:0000269" key="4">
    <source>
    </source>
</evidence>
<evidence type="ECO:0000269" key="5">
    <source>
    </source>
</evidence>
<evidence type="ECO:0000305" key="6"/>
<reference key="1">
    <citation type="journal article" date="1991" name="Mol. Gen. Genet.">
        <title>Cloning and sequence analysis of genes involved in erythromycin biosynthesis in Saccharopolyspora erythraea: sequence similarities between EryG and a family of S-adenosylmethionine-dependent methyltransferases.</title>
        <authorList>
            <person name="Haydock S.F."/>
            <person name="Dowson J.A."/>
            <person name="Dhillon N."/>
            <person name="Roberts G.A."/>
            <person name="Cortes J."/>
            <person name="Leadlay P.F."/>
        </authorList>
    </citation>
    <scope>NUCLEOTIDE SEQUENCE [GENOMIC DNA]</scope>
    <scope>FUNCTION</scope>
    <scope>PATHWAY</scope>
    <source>
        <strain>ATCC 11635 / DSM 40517 / JCM 4748 / NBRC 13426 / NCIMB 8594 / NRRL 2338</strain>
    </source>
</reference>
<reference key="2">
    <citation type="journal article" date="2007" name="Nat. Biotechnol.">
        <title>Complete genome sequence of the erythromycin-producing bacterium Saccharopolyspora erythraea NRRL23338.</title>
        <authorList>
            <person name="Oliynyk M."/>
            <person name="Samborskyy M."/>
            <person name="Lester J.B."/>
            <person name="Mironenko T."/>
            <person name="Scott N."/>
            <person name="Dickens S."/>
            <person name="Haydock S.F."/>
            <person name="Leadlay P.F."/>
        </authorList>
    </citation>
    <scope>NUCLEOTIDE SEQUENCE [LARGE SCALE GENOMIC DNA]</scope>
    <source>
        <strain>ATCC 11635 / DSM 40517 / JCM 4748 / NBRC 13426 / NCIMB 8594 / NRRL 2338</strain>
    </source>
</reference>
<reference key="3">
    <citation type="journal article" date="1991" name="Science">
        <title>An erythromycin derivative produced by targeted gene disruption in Saccharopolyspora erythraea.</title>
        <authorList>
            <person name="Weber J.M."/>
            <person name="Leung J.O."/>
            <person name="Swanson S.J."/>
            <person name="Idler K.B."/>
            <person name="McAlpine J.B."/>
        </authorList>
    </citation>
    <scope>NUCLEOTIDE SEQUENCE [GENOMIC DNA] OF 257-306</scope>
    <scope>PATHWAY</scope>
</reference>
<reference key="4">
    <citation type="journal article" date="1990" name="J. Bacteriol.">
        <title>Mutation and cloning of eryG, the structural gene for erythromycin O-methyltransferase from Saccharopolyspora erythraea, and expression of eryG in Escherichia coli.</title>
        <authorList>
            <person name="Paulus T.J."/>
            <person name="Tuan J.S."/>
            <person name="Luebke V.E."/>
            <person name="Maine G.T."/>
            <person name="DeWitt J.P."/>
            <person name="Katz L."/>
        </authorList>
    </citation>
    <scope>FUNCTION</scope>
    <scope>CATALYTIC ACTIVITY</scope>
    <scope>PATHWAY</scope>
    <scope>DISRUPTION PHENOTYPE</scope>
    <source>
        <strain>ATCC 11635 / DSM 40517 / JCM 4748 / NBRC 13426 / NCIMB 8594 / NRRL 2338</strain>
    </source>
</reference>
<reference key="5">
    <citation type="journal article" date="1997" name="Microbiology">
        <title>Sequencing and mutagenesis of genes from the erythromycin biosynthetic gene cluster of Saccharopolyspora erythraea that are involved in L-mycarose and D-desosamine production.</title>
        <authorList>
            <person name="Summers R.G."/>
            <person name="Donadio S."/>
            <person name="Staver M.J."/>
            <person name="Wendt-Pienkowski E."/>
            <person name="Hutchinson C.R."/>
            <person name="Katz L."/>
        </authorList>
    </citation>
    <scope>PATHWAY</scope>
    <source>
        <strain>ATCC 11635 / DSM 40517 / JCM 4748 / NBRC 13426 / NCIMB 8594 / NRRL 2338</strain>
    </source>
</reference>
<feature type="chain" id="PRO_0000418462" description="Erythromycin 3''-O-methyltransferase">
    <location>
        <begin position="1"/>
        <end position="306"/>
    </location>
</feature>
<feature type="binding site" evidence="1">
    <location>
        <position position="157"/>
    </location>
    <ligand>
        <name>S-adenosyl-L-methionine</name>
        <dbReference type="ChEBI" id="CHEBI:59789"/>
    </ligand>
</feature>
<feature type="binding site" evidence="1">
    <location>
        <position position="162"/>
    </location>
    <ligand>
        <name>S-adenosyl-L-methionine</name>
        <dbReference type="ChEBI" id="CHEBI:59789"/>
    </ligand>
</feature>
<feature type="sequence conflict" description="In Ref. 1; CAA42929." evidence="6" ref="1">
    <original>E</original>
    <variation>A</variation>
    <location>
        <position position="35"/>
    </location>
</feature>
<feature type="sequence conflict" description="In Ref. 3; AAA26498." evidence="6" ref="3">
    <original>LRK</original>
    <variation>ARC</variation>
    <location>
        <begin position="257"/>
        <end position="259"/>
    </location>
</feature>
<organism>
    <name type="scientific">Saccharopolyspora erythraea (strain ATCC 11635 / DSM 40517 / JCM 4748 / NBRC 13426 / NCIMB 8594 / NRRL 2338)</name>
    <dbReference type="NCBI Taxonomy" id="405948"/>
    <lineage>
        <taxon>Bacteria</taxon>
        <taxon>Bacillati</taxon>
        <taxon>Actinomycetota</taxon>
        <taxon>Actinomycetes</taxon>
        <taxon>Pseudonocardiales</taxon>
        <taxon>Pseudonocardiaceae</taxon>
        <taxon>Saccharopolyspora</taxon>
    </lineage>
</organism>
<name>ERYG_SACEN</name>
<accession>A4F7P5</accession>
<accession>Q54095</accession>
<accession>Q54098</accession>
<sequence length="306" mass="33990">MSVKQKSALQDLVDFAKWHVWTRVRPSSRARLAYELFADDHEATTEGAYINLGYWKPGCAGLEEANQELANQLAEAAGISEGDEVLDVGFGLGAQDFFWLETRKPARIVGVDLTPSHVRIASERAERENVQDRLQFKEGSATDLPFGAETFDRVTSLESALHYEPRTDFFKGAFEVLKPGGVLAIGDIIPLDLREPGSDGPPKLAPQRSGSLSGGIPVENWVPRETYAKQLREAGFVDVEVKSVRDNVMEPWLDYWLRKLQDESFKKSVSRLFYSQVKRSLTSDSGMKGELPALDFVIASARKPGA</sequence>
<protein>
    <recommendedName>
        <fullName>Erythromycin 3''-O-methyltransferase</fullName>
        <ecNumber>2.1.1.254</ecNumber>
    </recommendedName>
    <alternativeName>
        <fullName>Erythromycin biosynthesis protein G</fullName>
    </alternativeName>
</protein>
<comment type="function">
    <text evidence="2 4">S-adenosyl-L-methionine-dependent O-methyltransferase that catalyzes the last step in the erythromycin biosynthesis pathway. Methylates the position 3 of the mycarosyl moiety of erythromycin C, forming the most active form of the antibiotic, erythromycin A. Can also methylate the precursor erythromycin D, forming erythromycin B.</text>
</comment>
<comment type="catalytic activity">
    <reaction evidence="4">
        <text>erythromycin C + S-adenosyl-L-methionine = erythromycin A + S-adenosyl-L-homocysteine + H(+)</text>
        <dbReference type="Rhea" id="RHEA:32647"/>
        <dbReference type="ChEBI" id="CHEBI:15378"/>
        <dbReference type="ChEBI" id="CHEBI:57856"/>
        <dbReference type="ChEBI" id="CHEBI:59789"/>
        <dbReference type="ChEBI" id="CHEBI:64258"/>
        <dbReference type="ChEBI" id="CHEBI:64268"/>
        <dbReference type="EC" id="2.1.1.254"/>
    </reaction>
</comment>
<comment type="catalytic activity">
    <reaction evidence="4">
        <text>erythromycin D + S-adenosyl-L-methionine = erythromycin B + S-adenosyl-L-homocysteine + H(+)</text>
        <dbReference type="Rhea" id="RHEA:32651"/>
        <dbReference type="ChEBI" id="CHEBI:15378"/>
        <dbReference type="ChEBI" id="CHEBI:57856"/>
        <dbReference type="ChEBI" id="CHEBI:59789"/>
        <dbReference type="ChEBI" id="CHEBI:63677"/>
        <dbReference type="ChEBI" id="CHEBI:64279"/>
        <dbReference type="EC" id="2.1.1.254"/>
    </reaction>
</comment>
<comment type="pathway">
    <text evidence="2 3 4 5">Antibiotic biosynthesis; erythromycin biosynthesis.</text>
</comment>
<comment type="disruption phenotype">
    <text evidence="4">Cells accumulate erythromycin C and its precursor erythromycin D, with little or no production of erythromycin A or erythromycin B.</text>
</comment>
<comment type="similarity">
    <text evidence="6">Belongs to the methyltransferase superfamily.</text>
</comment>
<keyword id="KW-0045">Antibiotic biosynthesis</keyword>
<keyword id="KW-0489">Methyltransferase</keyword>
<keyword id="KW-1185">Reference proteome</keyword>
<keyword id="KW-0949">S-adenosyl-L-methionine</keyword>
<keyword id="KW-0808">Transferase</keyword>